<name>RU1C_DROME</name>
<protein>
    <recommendedName>
        <fullName evidence="1">U1 small nuclear ribonucleoprotein C</fullName>
        <shortName evidence="1">U1 snRNP C</shortName>
        <shortName evidence="1">U1-C</shortName>
        <shortName evidence="1">U1C</shortName>
    </recommendedName>
</protein>
<feature type="chain" id="PRO_0000414261" description="U1 small nuclear ribonucleoprotein C">
    <location>
        <begin position="1"/>
        <end position="145"/>
    </location>
</feature>
<feature type="zinc finger region" description="Matrin-type" evidence="1">
    <location>
        <begin position="4"/>
        <end position="36"/>
    </location>
</feature>
<feature type="region of interest" description="Disordered" evidence="2">
    <location>
        <begin position="67"/>
        <end position="91"/>
    </location>
</feature>
<feature type="compositionally biased region" description="Pro residues" evidence="2">
    <location>
        <begin position="73"/>
        <end position="91"/>
    </location>
</feature>
<proteinExistence type="evidence at protein level"/>
<sequence length="145" mass="15760">MPKYYCDYCDTYLTHDSPSVRKTHCTGRKHRDNVKFYYQKWMEEQAQHLIDATTAAFKAGKITNNPFAGGPGGAPPKPAGVSIPPPNMGAPPRPGMPGMPYMPPLMNPMMGMRPPPIMNPMAMMGPPPPLGTIPGVRPGIMNGPK</sequence>
<evidence type="ECO:0000255" key="1">
    <source>
        <dbReference type="HAMAP-Rule" id="MF_03153"/>
    </source>
</evidence>
<evidence type="ECO:0000256" key="2">
    <source>
        <dbReference type="SAM" id="MobiDB-lite"/>
    </source>
</evidence>
<evidence type="ECO:0000269" key="3">
    <source>
    </source>
</evidence>
<evidence type="ECO:0000269" key="4">
    <source>
    </source>
</evidence>
<keyword id="KW-0903">Direct protein sequencing</keyword>
<keyword id="KW-0479">Metal-binding</keyword>
<keyword id="KW-0539">Nucleus</keyword>
<keyword id="KW-1185">Reference proteome</keyword>
<keyword id="KW-0687">Ribonucleoprotein</keyword>
<keyword id="KW-0694">RNA-binding</keyword>
<keyword id="KW-0862">Zinc</keyword>
<keyword id="KW-0863">Zinc-finger</keyword>
<organism>
    <name type="scientific">Drosophila melanogaster</name>
    <name type="common">Fruit fly</name>
    <dbReference type="NCBI Taxonomy" id="7227"/>
    <lineage>
        <taxon>Eukaryota</taxon>
        <taxon>Metazoa</taxon>
        <taxon>Ecdysozoa</taxon>
        <taxon>Arthropoda</taxon>
        <taxon>Hexapoda</taxon>
        <taxon>Insecta</taxon>
        <taxon>Pterygota</taxon>
        <taxon>Neoptera</taxon>
        <taxon>Endopterygota</taxon>
        <taxon>Diptera</taxon>
        <taxon>Brachycera</taxon>
        <taxon>Muscomorpha</taxon>
        <taxon>Ephydroidea</taxon>
        <taxon>Drosophilidae</taxon>
        <taxon>Drosophila</taxon>
        <taxon>Sophophora</taxon>
    </lineage>
</organism>
<accession>Q9VE17</accession>
<comment type="function">
    <text evidence="1 3 4">Component of the spliceosomal U1 snRNP, which is essential for recognition of the pre-mRNA 5' splice-site and the subsequent assembly of the spliceosome. U1-C is directly involved in initial 5' splice-site recognition for both constitutive and regulated alternative splicing. The interaction with the 5' splice-site seems to precede base-pairing between the pre-mRNA and the U1 snRNA. Stimulates commitment or early (E) complex formation by stabilizing the base pairing of the 5' end of the U1 snRNA and the 5' splice-site region (By similarity). Regulates alternative splicing of a distinct group of target genes.</text>
</comment>
<comment type="subunit">
    <text evidence="1">U1 snRNP is composed of the 7 core Sm proteins B/B', D1, D2, D3, E, F and G that assemble in a heptameric protein ring on the Sm site of the small nuclear RNA to form the core snRNP, and at least 3 U1 snRNP-specific proteins U1-70K, U1-A and U1-C. U1-C interacts with U1 snRNA and the 5' splice-site region of the pre-mRNA.</text>
</comment>
<comment type="subcellular location">
    <subcellularLocation>
        <location evidence="1">Nucleus</location>
    </subcellularLocation>
</comment>
<comment type="similarity">
    <text evidence="1">Belongs to the U1 small nuclear ribonucleoprotein C family.</text>
</comment>
<reference key="1">
    <citation type="journal article" date="2000" name="Science">
        <title>The genome sequence of Drosophila melanogaster.</title>
        <authorList>
            <person name="Adams M.D."/>
            <person name="Celniker S.E."/>
            <person name="Holt R.A."/>
            <person name="Evans C.A."/>
            <person name="Gocayne J.D."/>
            <person name="Amanatides P.G."/>
            <person name="Scherer S.E."/>
            <person name="Li P.W."/>
            <person name="Hoskins R.A."/>
            <person name="Galle R.F."/>
            <person name="George R.A."/>
            <person name="Lewis S.E."/>
            <person name="Richards S."/>
            <person name="Ashburner M."/>
            <person name="Henderson S.N."/>
            <person name="Sutton G.G."/>
            <person name="Wortman J.R."/>
            <person name="Yandell M.D."/>
            <person name="Zhang Q."/>
            <person name="Chen L.X."/>
            <person name="Brandon R.C."/>
            <person name="Rogers Y.-H.C."/>
            <person name="Blazej R.G."/>
            <person name="Champe M."/>
            <person name="Pfeiffer B.D."/>
            <person name="Wan K.H."/>
            <person name="Doyle C."/>
            <person name="Baxter E.G."/>
            <person name="Helt G."/>
            <person name="Nelson C.R."/>
            <person name="Miklos G.L.G."/>
            <person name="Abril J.F."/>
            <person name="Agbayani A."/>
            <person name="An H.-J."/>
            <person name="Andrews-Pfannkoch C."/>
            <person name="Baldwin D."/>
            <person name="Ballew R.M."/>
            <person name="Basu A."/>
            <person name="Baxendale J."/>
            <person name="Bayraktaroglu L."/>
            <person name="Beasley E.M."/>
            <person name="Beeson K.Y."/>
            <person name="Benos P.V."/>
            <person name="Berman B.P."/>
            <person name="Bhandari D."/>
            <person name="Bolshakov S."/>
            <person name="Borkova D."/>
            <person name="Botchan M.R."/>
            <person name="Bouck J."/>
            <person name="Brokstein P."/>
            <person name="Brottier P."/>
            <person name="Burtis K.C."/>
            <person name="Busam D.A."/>
            <person name="Butler H."/>
            <person name="Cadieu E."/>
            <person name="Center A."/>
            <person name="Chandra I."/>
            <person name="Cherry J.M."/>
            <person name="Cawley S."/>
            <person name="Dahlke C."/>
            <person name="Davenport L.B."/>
            <person name="Davies P."/>
            <person name="de Pablos B."/>
            <person name="Delcher A."/>
            <person name="Deng Z."/>
            <person name="Mays A.D."/>
            <person name="Dew I."/>
            <person name="Dietz S.M."/>
            <person name="Dodson K."/>
            <person name="Doup L.E."/>
            <person name="Downes M."/>
            <person name="Dugan-Rocha S."/>
            <person name="Dunkov B.C."/>
            <person name="Dunn P."/>
            <person name="Durbin K.J."/>
            <person name="Evangelista C.C."/>
            <person name="Ferraz C."/>
            <person name="Ferriera S."/>
            <person name="Fleischmann W."/>
            <person name="Fosler C."/>
            <person name="Gabrielian A.E."/>
            <person name="Garg N.S."/>
            <person name="Gelbart W.M."/>
            <person name="Glasser K."/>
            <person name="Glodek A."/>
            <person name="Gong F."/>
            <person name="Gorrell J.H."/>
            <person name="Gu Z."/>
            <person name="Guan P."/>
            <person name="Harris M."/>
            <person name="Harris N.L."/>
            <person name="Harvey D.A."/>
            <person name="Heiman T.J."/>
            <person name="Hernandez J.R."/>
            <person name="Houck J."/>
            <person name="Hostin D."/>
            <person name="Houston K.A."/>
            <person name="Howland T.J."/>
            <person name="Wei M.-H."/>
            <person name="Ibegwam C."/>
            <person name="Jalali M."/>
            <person name="Kalush F."/>
            <person name="Karpen G.H."/>
            <person name="Ke Z."/>
            <person name="Kennison J.A."/>
            <person name="Ketchum K.A."/>
            <person name="Kimmel B.E."/>
            <person name="Kodira C.D."/>
            <person name="Kraft C.L."/>
            <person name="Kravitz S."/>
            <person name="Kulp D."/>
            <person name="Lai Z."/>
            <person name="Lasko P."/>
            <person name="Lei Y."/>
            <person name="Levitsky A.A."/>
            <person name="Li J.H."/>
            <person name="Li Z."/>
            <person name="Liang Y."/>
            <person name="Lin X."/>
            <person name="Liu X."/>
            <person name="Mattei B."/>
            <person name="McIntosh T.C."/>
            <person name="McLeod M.P."/>
            <person name="McPherson D."/>
            <person name="Merkulov G."/>
            <person name="Milshina N.V."/>
            <person name="Mobarry C."/>
            <person name="Morris J."/>
            <person name="Moshrefi A."/>
            <person name="Mount S.M."/>
            <person name="Moy M."/>
            <person name="Murphy B."/>
            <person name="Murphy L."/>
            <person name="Muzny D.M."/>
            <person name="Nelson D.L."/>
            <person name="Nelson D.R."/>
            <person name="Nelson K.A."/>
            <person name="Nixon K."/>
            <person name="Nusskern D.R."/>
            <person name="Pacleb J.M."/>
            <person name="Palazzolo M."/>
            <person name="Pittman G.S."/>
            <person name="Pan S."/>
            <person name="Pollard J."/>
            <person name="Puri V."/>
            <person name="Reese M.G."/>
            <person name="Reinert K."/>
            <person name="Remington K."/>
            <person name="Saunders R.D.C."/>
            <person name="Scheeler F."/>
            <person name="Shen H."/>
            <person name="Shue B.C."/>
            <person name="Siden-Kiamos I."/>
            <person name="Simpson M."/>
            <person name="Skupski M.P."/>
            <person name="Smith T.J."/>
            <person name="Spier E."/>
            <person name="Spradling A.C."/>
            <person name="Stapleton M."/>
            <person name="Strong R."/>
            <person name="Sun E."/>
            <person name="Svirskas R."/>
            <person name="Tector C."/>
            <person name="Turner R."/>
            <person name="Venter E."/>
            <person name="Wang A.H."/>
            <person name="Wang X."/>
            <person name="Wang Z.-Y."/>
            <person name="Wassarman D.A."/>
            <person name="Weinstock G.M."/>
            <person name="Weissenbach J."/>
            <person name="Williams S.M."/>
            <person name="Woodage T."/>
            <person name="Worley K.C."/>
            <person name="Wu D."/>
            <person name="Yang S."/>
            <person name="Yao Q.A."/>
            <person name="Ye J."/>
            <person name="Yeh R.-F."/>
            <person name="Zaveri J.S."/>
            <person name="Zhan M."/>
            <person name="Zhang G."/>
            <person name="Zhao Q."/>
            <person name="Zheng L."/>
            <person name="Zheng X.H."/>
            <person name="Zhong F.N."/>
            <person name="Zhong W."/>
            <person name="Zhou X."/>
            <person name="Zhu S.C."/>
            <person name="Zhu X."/>
            <person name="Smith H.O."/>
            <person name="Gibbs R.A."/>
            <person name="Myers E.W."/>
            <person name="Rubin G.M."/>
            <person name="Venter J.C."/>
        </authorList>
    </citation>
    <scope>NUCLEOTIDE SEQUENCE [LARGE SCALE GENOMIC DNA]</scope>
    <source>
        <strain>Berkeley</strain>
    </source>
</reference>
<reference key="2">
    <citation type="journal article" date="2002" name="Genome Biol.">
        <title>Annotation of the Drosophila melanogaster euchromatic genome: a systematic review.</title>
        <authorList>
            <person name="Misra S."/>
            <person name="Crosby M.A."/>
            <person name="Mungall C.J."/>
            <person name="Matthews B.B."/>
            <person name="Campbell K.S."/>
            <person name="Hradecky P."/>
            <person name="Huang Y."/>
            <person name="Kaminker J.S."/>
            <person name="Millburn G.H."/>
            <person name="Prochnik S.E."/>
            <person name="Smith C.D."/>
            <person name="Tupy J.L."/>
            <person name="Whitfield E.J."/>
            <person name="Bayraktaroglu L."/>
            <person name="Berman B.P."/>
            <person name="Bettencourt B.R."/>
            <person name="Celniker S.E."/>
            <person name="de Grey A.D.N.J."/>
            <person name="Drysdale R.A."/>
            <person name="Harris N.L."/>
            <person name="Richter J."/>
            <person name="Russo S."/>
            <person name="Schroeder A.J."/>
            <person name="Shu S.Q."/>
            <person name="Stapleton M."/>
            <person name="Yamada C."/>
            <person name="Ashburner M."/>
            <person name="Gelbart W.M."/>
            <person name="Rubin G.M."/>
            <person name="Lewis S.E."/>
        </authorList>
    </citation>
    <scope>GENOME REANNOTATION</scope>
    <source>
        <strain>Berkeley</strain>
    </source>
</reference>
<reference key="3">
    <citation type="submission" date="2003-02" db="EMBL/GenBank/DDBJ databases">
        <authorList>
            <person name="Stapleton M."/>
            <person name="Brokstein P."/>
            <person name="Hong L."/>
            <person name="Agbayani A."/>
            <person name="Carlson J."/>
            <person name="Champe M."/>
            <person name="Chavez C."/>
            <person name="Dorsett V."/>
            <person name="Dresnek D."/>
            <person name="Farfan D."/>
            <person name="Frise E."/>
            <person name="George R."/>
            <person name="Gonzalez M."/>
            <person name="Guarin H."/>
            <person name="Kronmiller B."/>
            <person name="Li P."/>
            <person name="Liao G."/>
            <person name="Miranda A."/>
            <person name="Mungall C.J."/>
            <person name="Nunoo J."/>
            <person name="Pacleb J."/>
            <person name="Paragas V."/>
            <person name="Park S."/>
            <person name="Patel S."/>
            <person name="Phouanenavong S."/>
            <person name="Wan K."/>
            <person name="Yu C."/>
            <person name="Lewis S.E."/>
            <person name="Rubin G.M."/>
            <person name="Celniker S.E."/>
        </authorList>
    </citation>
    <scope>NUCLEOTIDE SEQUENCE [LARGE SCALE MRNA]</scope>
    <source>
        <strain>Berkeley</strain>
    </source>
</reference>
<reference key="4">
    <citation type="journal article" date="2001" name="RNA">
        <title>Purification of Drosophila snRNPs and characterization of two populations of functional U1 particles.</title>
        <authorList>
            <person name="Labourier E."/>
            <person name="Rio D.C."/>
        </authorList>
    </citation>
    <scope>IDENTIFICATION IN THE U1 SNRNP COMPLEX</scope>
    <scope>PROTEIN SEQUENCE OF 35-51</scope>
</reference>
<reference key="5">
    <citation type="journal article" date="1991" name="Nucleic Acids Res.">
        <title>Polypeptide components of Drosophila small nuclear ribonucleoprotein particles.</title>
        <authorList>
            <person name="Paterson T."/>
            <person name="Beggs J.D."/>
            <person name="Finnegan D.J."/>
            <person name="Luehrmann R."/>
        </authorList>
    </citation>
    <scope>IDENTIFICATION IN THE U1 SNRNP COMPLEX</scope>
</reference>
<reference key="6">
    <citation type="journal article" date="2004" name="Proc. Natl. Acad. Sci. U.S.A.">
        <title>Identification of alternative splicing regulators by RNA interference in Drosophila.</title>
        <authorList>
            <person name="Park J.W."/>
            <person name="Parisky K."/>
            <person name="Celotto A.M."/>
            <person name="Reenan R.A."/>
            <person name="Graveley B.R."/>
        </authorList>
    </citation>
    <scope>FUNCTION</scope>
</reference>
<reference key="7">
    <citation type="journal article" date="2009" name="J. Biol. Chem.">
        <title>Control of alternative splicing by signal-dependent degradation of splicing-regulatory proteins.</title>
        <authorList>
            <person name="Katzenberger R.J."/>
            <person name="Marengo M.S."/>
            <person name="Wassarman D.A."/>
        </authorList>
    </citation>
    <scope>FUNCTION</scope>
</reference>
<gene>
    <name evidence="1" type="primary">snRNP-U1-C</name>
    <name type="ORF">CG5454</name>
</gene>
<dbReference type="EMBL" id="AE014297">
    <property type="protein sequence ID" value="AAF55616.1"/>
    <property type="molecule type" value="Genomic_DNA"/>
</dbReference>
<dbReference type="EMBL" id="BT003460">
    <property type="protein sequence ID" value="AAO39463.1"/>
    <property type="molecule type" value="mRNA"/>
</dbReference>
<dbReference type="RefSeq" id="NP_650767.1">
    <property type="nucleotide sequence ID" value="NM_142510.3"/>
</dbReference>
<dbReference type="BioGRID" id="67277">
    <property type="interactions" value="17"/>
</dbReference>
<dbReference type="FunCoup" id="Q9VE17">
    <property type="interactions" value="858"/>
</dbReference>
<dbReference type="IntAct" id="Q9VE17">
    <property type="interactions" value="21"/>
</dbReference>
<dbReference type="STRING" id="7227.FBpp0083134"/>
<dbReference type="PaxDb" id="7227-FBpp0083134"/>
<dbReference type="DNASU" id="42274"/>
<dbReference type="EnsemblMetazoa" id="FBtr0083720">
    <property type="protein sequence ID" value="FBpp0083134"/>
    <property type="gene ID" value="FBgn0261792"/>
</dbReference>
<dbReference type="GeneID" id="42274"/>
<dbReference type="KEGG" id="dme:Dmel_CG5454"/>
<dbReference type="UCSC" id="CG5454-RA">
    <property type="organism name" value="d. melanogaster"/>
</dbReference>
<dbReference type="AGR" id="FB:FBgn0261792"/>
<dbReference type="CTD" id="42274"/>
<dbReference type="FlyBase" id="FBgn0261792">
    <property type="gene designation" value="snRNP-U1-C"/>
</dbReference>
<dbReference type="VEuPathDB" id="VectorBase:FBgn0261792"/>
<dbReference type="eggNOG" id="KOG3454">
    <property type="taxonomic scope" value="Eukaryota"/>
</dbReference>
<dbReference type="GeneTree" id="ENSGT01030000234866"/>
<dbReference type="HOGENOM" id="CLU_079697_3_1_1"/>
<dbReference type="InParanoid" id="Q9VE17"/>
<dbReference type="OMA" id="QMRPPLM"/>
<dbReference type="OrthoDB" id="76567at2759"/>
<dbReference type="PhylomeDB" id="Q9VE17"/>
<dbReference type="SignaLink" id="Q9VE17"/>
<dbReference type="BioGRID-ORCS" id="42274">
    <property type="hits" value="0 hits in 1 CRISPR screen"/>
</dbReference>
<dbReference type="GenomeRNAi" id="42274"/>
<dbReference type="PRO" id="PR:Q9VE17"/>
<dbReference type="Proteomes" id="UP000000803">
    <property type="component" value="Chromosome 3R"/>
</dbReference>
<dbReference type="Bgee" id="FBgn0261792">
    <property type="expression patterns" value="Expressed in adult class III enteroendocrine cell in adult midgut (Drosophila) and 102 other cell types or tissues"/>
</dbReference>
<dbReference type="ExpressionAtlas" id="Q9VE17">
    <property type="expression patterns" value="baseline and differential"/>
</dbReference>
<dbReference type="GO" id="GO:0000243">
    <property type="term" value="C:commitment complex"/>
    <property type="evidence" value="ECO:0007669"/>
    <property type="project" value="UniProtKB-UniRule"/>
</dbReference>
<dbReference type="GO" id="GO:0005634">
    <property type="term" value="C:nucleus"/>
    <property type="evidence" value="ECO:0000314"/>
    <property type="project" value="FlyBase"/>
</dbReference>
<dbReference type="GO" id="GO:0030532">
    <property type="term" value="C:small nuclear ribonucleoprotein complex"/>
    <property type="evidence" value="ECO:0000314"/>
    <property type="project" value="FlyBase"/>
</dbReference>
<dbReference type="GO" id="GO:0005685">
    <property type="term" value="C:U1 snRNP"/>
    <property type="evidence" value="ECO:0000250"/>
    <property type="project" value="FlyBase"/>
</dbReference>
<dbReference type="GO" id="GO:0071004">
    <property type="term" value="C:U2-type prespliceosome"/>
    <property type="evidence" value="ECO:0007669"/>
    <property type="project" value="UniProtKB-UniRule"/>
</dbReference>
<dbReference type="GO" id="GO:0003729">
    <property type="term" value="F:mRNA binding"/>
    <property type="evidence" value="ECO:0007669"/>
    <property type="project" value="UniProtKB-UniRule"/>
</dbReference>
<dbReference type="GO" id="GO:0030627">
    <property type="term" value="F:pre-mRNA 5'-splice site binding"/>
    <property type="evidence" value="ECO:0000318"/>
    <property type="project" value="GO_Central"/>
</dbReference>
<dbReference type="GO" id="GO:0030619">
    <property type="term" value="F:U1 snRNA binding"/>
    <property type="evidence" value="ECO:0007669"/>
    <property type="project" value="UniProtKB-UniRule"/>
</dbReference>
<dbReference type="GO" id="GO:0008270">
    <property type="term" value="F:zinc ion binding"/>
    <property type="evidence" value="ECO:0007669"/>
    <property type="project" value="UniProtKB-UniRule"/>
</dbReference>
<dbReference type="GO" id="GO:0000395">
    <property type="term" value="P:mRNA 5'-splice site recognition"/>
    <property type="evidence" value="ECO:0000318"/>
    <property type="project" value="GO_Central"/>
</dbReference>
<dbReference type="GO" id="GO:0000398">
    <property type="term" value="P:mRNA splicing, via spliceosome"/>
    <property type="evidence" value="ECO:0000250"/>
    <property type="project" value="FlyBase"/>
</dbReference>
<dbReference type="GO" id="GO:0000381">
    <property type="term" value="P:regulation of alternative mRNA splicing, via spliceosome"/>
    <property type="evidence" value="ECO:0000315"/>
    <property type="project" value="FlyBase"/>
</dbReference>
<dbReference type="GO" id="GO:0000387">
    <property type="term" value="P:spliceosomal snRNP assembly"/>
    <property type="evidence" value="ECO:0007669"/>
    <property type="project" value="UniProtKB-UniRule"/>
</dbReference>
<dbReference type="FunFam" id="3.30.160.60:FF:000059">
    <property type="entry name" value="U1 small nuclear ribonucleoprotein C"/>
    <property type="match status" value="1"/>
</dbReference>
<dbReference type="Gene3D" id="3.30.160.60">
    <property type="entry name" value="Classic Zinc Finger"/>
    <property type="match status" value="1"/>
</dbReference>
<dbReference type="HAMAP" id="MF_03153">
    <property type="entry name" value="U1_C"/>
    <property type="match status" value="1"/>
</dbReference>
<dbReference type="InterPro" id="IPR000690">
    <property type="entry name" value="Matrin/U1-C_Znf_C2H2"/>
</dbReference>
<dbReference type="InterPro" id="IPR003604">
    <property type="entry name" value="Matrin/U1-like-C_Znf_C2H2"/>
</dbReference>
<dbReference type="InterPro" id="IPR013085">
    <property type="entry name" value="U1-CZ_Znf_C2H2"/>
</dbReference>
<dbReference type="InterPro" id="IPR017340">
    <property type="entry name" value="U1_snRNP-C"/>
</dbReference>
<dbReference type="InterPro" id="IPR036236">
    <property type="entry name" value="Znf_C2H2_sf"/>
</dbReference>
<dbReference type="PANTHER" id="PTHR31148">
    <property type="entry name" value="U1 SMALL NUCLEAR RIBONUCLEOPROTEIN C"/>
    <property type="match status" value="1"/>
</dbReference>
<dbReference type="PANTHER" id="PTHR31148:SF1">
    <property type="entry name" value="U1 SMALL NUCLEAR RIBONUCLEOPROTEIN C"/>
    <property type="match status" value="1"/>
</dbReference>
<dbReference type="Pfam" id="PF06220">
    <property type="entry name" value="zf-U1"/>
    <property type="match status" value="1"/>
</dbReference>
<dbReference type="PIRSF" id="PIRSF037969">
    <property type="entry name" value="U1_snRNP-C"/>
    <property type="match status" value="1"/>
</dbReference>
<dbReference type="SMART" id="SM00451">
    <property type="entry name" value="ZnF_U1"/>
    <property type="match status" value="1"/>
</dbReference>
<dbReference type="SUPFAM" id="SSF57667">
    <property type="entry name" value="beta-beta-alpha zinc fingers"/>
    <property type="match status" value="1"/>
</dbReference>
<dbReference type="PROSITE" id="PS50171">
    <property type="entry name" value="ZF_MATRIN"/>
    <property type="match status" value="1"/>
</dbReference>